<reference key="1">
    <citation type="journal article" date="2007" name="ISME J.">
        <title>Population level functional diversity in a microbial community revealed by comparative genomic and metagenomic analyses.</title>
        <authorList>
            <person name="Bhaya D."/>
            <person name="Grossman A.R."/>
            <person name="Steunou A.-S."/>
            <person name="Khuri N."/>
            <person name="Cohan F.M."/>
            <person name="Hamamura N."/>
            <person name="Melendrez M.C."/>
            <person name="Bateson M.M."/>
            <person name="Ward D.M."/>
            <person name="Heidelberg J.F."/>
        </authorList>
    </citation>
    <scope>NUCLEOTIDE SEQUENCE [LARGE SCALE GENOMIC DNA]</scope>
    <source>
        <strain>JA-3-3Ab</strain>
    </source>
</reference>
<evidence type="ECO:0000255" key="1">
    <source>
        <dbReference type="HAMAP-Rule" id="MF_00439"/>
    </source>
</evidence>
<dbReference type="EMBL" id="CP000239">
    <property type="protein sequence ID" value="ABC99518.1"/>
    <property type="molecule type" value="Genomic_DNA"/>
</dbReference>
<dbReference type="RefSeq" id="WP_011430196.1">
    <property type="nucleotide sequence ID" value="NC_007775.1"/>
</dbReference>
<dbReference type="SMR" id="Q2JUT9"/>
<dbReference type="STRING" id="321327.CYA_1342"/>
<dbReference type="KEGG" id="cya:CYA_1342"/>
<dbReference type="eggNOG" id="COG0457">
    <property type="taxonomic scope" value="Bacteria"/>
</dbReference>
<dbReference type="HOGENOM" id="CLU_141248_0_0_3"/>
<dbReference type="OrthoDB" id="9429505at2"/>
<dbReference type="Proteomes" id="UP000008818">
    <property type="component" value="Chromosome"/>
</dbReference>
<dbReference type="GO" id="GO:0031676">
    <property type="term" value="C:plasma membrane-derived thylakoid membrane"/>
    <property type="evidence" value="ECO:0007669"/>
    <property type="project" value="UniProtKB-SubCell"/>
</dbReference>
<dbReference type="GO" id="GO:0015979">
    <property type="term" value="P:photosynthesis"/>
    <property type="evidence" value="ECO:0007669"/>
    <property type="project" value="UniProtKB-UniRule"/>
</dbReference>
<dbReference type="Gene3D" id="1.25.40.10">
    <property type="entry name" value="Tetratricopeptide repeat domain"/>
    <property type="match status" value="2"/>
</dbReference>
<dbReference type="HAMAP" id="MF_00439">
    <property type="entry name" value="Ycf3"/>
    <property type="match status" value="1"/>
</dbReference>
<dbReference type="InterPro" id="IPR022818">
    <property type="entry name" value="PSI_Ycf3_assembly"/>
</dbReference>
<dbReference type="InterPro" id="IPR011990">
    <property type="entry name" value="TPR-like_helical_dom_sf"/>
</dbReference>
<dbReference type="InterPro" id="IPR019734">
    <property type="entry name" value="TPR_rpt"/>
</dbReference>
<dbReference type="InterPro" id="IPR051685">
    <property type="entry name" value="Ycf3/AcsC/BcsC/TPR_MFPF"/>
</dbReference>
<dbReference type="NCBIfam" id="NF002725">
    <property type="entry name" value="PRK02603.1"/>
    <property type="match status" value="1"/>
</dbReference>
<dbReference type="PANTHER" id="PTHR44943">
    <property type="entry name" value="CELLULOSE SYNTHASE OPERON PROTEIN C"/>
    <property type="match status" value="1"/>
</dbReference>
<dbReference type="PANTHER" id="PTHR44943:SF9">
    <property type="entry name" value="TPR-REPEAT-CONTAINING PROTEIN"/>
    <property type="match status" value="1"/>
</dbReference>
<dbReference type="Pfam" id="PF00515">
    <property type="entry name" value="TPR_1"/>
    <property type="match status" value="1"/>
</dbReference>
<dbReference type="Pfam" id="PF13176">
    <property type="entry name" value="TPR_7"/>
    <property type="match status" value="1"/>
</dbReference>
<dbReference type="SMART" id="SM00028">
    <property type="entry name" value="TPR"/>
    <property type="match status" value="3"/>
</dbReference>
<dbReference type="SUPFAM" id="SSF48452">
    <property type="entry name" value="TPR-like"/>
    <property type="match status" value="1"/>
</dbReference>
<dbReference type="PROSITE" id="PS50005">
    <property type="entry name" value="TPR"/>
    <property type="match status" value="3"/>
</dbReference>
<dbReference type="PROSITE" id="PS50293">
    <property type="entry name" value="TPR_REGION"/>
    <property type="match status" value="1"/>
</dbReference>
<gene>
    <name evidence="1" type="primary">ycf3</name>
    <name type="ordered locus">CYA_1342</name>
</gene>
<keyword id="KW-0472">Membrane</keyword>
<keyword id="KW-0602">Photosynthesis</keyword>
<keyword id="KW-0677">Repeat</keyword>
<keyword id="KW-0793">Thylakoid</keyword>
<keyword id="KW-0802">TPR repeat</keyword>
<proteinExistence type="inferred from homology"/>
<name>YCF3_SYNJA</name>
<feature type="chain" id="PRO_1000025968" description="Photosystem I assembly protein Ycf3">
    <location>
        <begin position="1"/>
        <end position="173"/>
    </location>
</feature>
<feature type="repeat" description="TPR 1">
    <location>
        <begin position="36"/>
        <end position="69"/>
    </location>
</feature>
<feature type="repeat" description="TPR 2">
    <location>
        <begin position="73"/>
        <end position="106"/>
    </location>
</feature>
<feature type="repeat" description="TPR 3">
    <location>
        <begin position="121"/>
        <end position="154"/>
    </location>
</feature>
<sequence length="173" mass="19824">MPRSMKNDNFIDKTFTVMADLILKLMPGVSPEQKKAFAYYRDGMAAQSEGEYAEALENYREALALEQDDEDRSYILYNMGLIYQSNGELDKALEYYHQALELNPRLCSALNNIAVLLHHKGEQSLQAGDEETAEALFDEAAQYWIRAIRIAPNNYIEAQNWLKTTGRANLELY</sequence>
<comment type="function">
    <text evidence="1">Essential for the assembly of the photosystem I (PSI) complex. May act as a chaperone-like factor to guide the assembly of the PSI subunits.</text>
</comment>
<comment type="subcellular location">
    <subcellularLocation>
        <location evidence="1">Cellular thylakoid membrane</location>
        <topology evidence="1">Peripheral membrane protein</topology>
    </subcellularLocation>
</comment>
<comment type="similarity">
    <text evidence="1">Belongs to the Ycf3 family.</text>
</comment>
<organism>
    <name type="scientific">Synechococcus sp. (strain JA-3-3Ab)</name>
    <name type="common">Cyanobacteria bacterium Yellowstone A-Prime</name>
    <dbReference type="NCBI Taxonomy" id="321327"/>
    <lineage>
        <taxon>Bacteria</taxon>
        <taxon>Bacillati</taxon>
        <taxon>Cyanobacteriota</taxon>
        <taxon>Cyanophyceae</taxon>
        <taxon>Synechococcales</taxon>
        <taxon>Synechococcaceae</taxon>
        <taxon>Synechococcus</taxon>
    </lineage>
</organism>
<accession>Q2JUT9</accession>
<protein>
    <recommendedName>
        <fullName evidence="1">Photosystem I assembly protein Ycf3</fullName>
    </recommendedName>
</protein>